<reference key="1">
    <citation type="journal article" date="2009" name="Stand. Genomic Sci.">
        <title>Complete genome sequence of Methanocorpusculum labreanum type strain Z.</title>
        <authorList>
            <person name="Anderson I.J."/>
            <person name="Sieprawska-Lupa M."/>
            <person name="Goltsman E."/>
            <person name="Lapidus A."/>
            <person name="Copeland A."/>
            <person name="Glavina Del Rio T."/>
            <person name="Tice H."/>
            <person name="Dalin E."/>
            <person name="Barry K."/>
            <person name="Pitluck S."/>
            <person name="Hauser L."/>
            <person name="Land M."/>
            <person name="Lucas S."/>
            <person name="Richardson P."/>
            <person name="Whitman W.B."/>
            <person name="Kyrpides N.C."/>
        </authorList>
    </citation>
    <scope>NUCLEOTIDE SEQUENCE [LARGE SCALE GENOMIC DNA]</scope>
    <source>
        <strain>ATCC 43576 / DSM 4855 / Z</strain>
    </source>
</reference>
<sequence>MAKNIGLNVAVPEKDCDDVNCPFHGSLPVRGQVITGKVVSERMQGTVVVERNFLHKVQKYDRYEKRSSKIHAHMAPCLNAKIGDEVKIAECRPLNKTTSYVVVEVIKE</sequence>
<accession>A2SPL1</accession>
<name>RS17_METLZ</name>
<organism>
    <name type="scientific">Methanocorpusculum labreanum (strain ATCC 43576 / DSM 4855 / Z)</name>
    <dbReference type="NCBI Taxonomy" id="410358"/>
    <lineage>
        <taxon>Archaea</taxon>
        <taxon>Methanobacteriati</taxon>
        <taxon>Methanobacteriota</taxon>
        <taxon>Stenosarchaea group</taxon>
        <taxon>Methanomicrobia</taxon>
        <taxon>Methanomicrobiales</taxon>
        <taxon>Methanocorpusculaceae</taxon>
        <taxon>Methanocorpusculum</taxon>
    </lineage>
</organism>
<dbReference type="EMBL" id="CP000559">
    <property type="protein sequence ID" value="ABN06267.1"/>
    <property type="molecule type" value="Genomic_DNA"/>
</dbReference>
<dbReference type="RefSeq" id="WP_011832468.1">
    <property type="nucleotide sequence ID" value="NC_008942.1"/>
</dbReference>
<dbReference type="SMR" id="A2SPL1"/>
<dbReference type="STRING" id="410358.Mlab_0090"/>
<dbReference type="GeneID" id="4796176"/>
<dbReference type="KEGG" id="mla:Mlab_0090"/>
<dbReference type="eggNOG" id="arCOG04096">
    <property type="taxonomic scope" value="Archaea"/>
</dbReference>
<dbReference type="HOGENOM" id="CLU_073626_0_3_2"/>
<dbReference type="OrthoDB" id="10698at2157"/>
<dbReference type="Proteomes" id="UP000000365">
    <property type="component" value="Chromosome"/>
</dbReference>
<dbReference type="GO" id="GO:0022627">
    <property type="term" value="C:cytosolic small ribosomal subunit"/>
    <property type="evidence" value="ECO:0007669"/>
    <property type="project" value="TreeGrafter"/>
</dbReference>
<dbReference type="GO" id="GO:0019843">
    <property type="term" value="F:rRNA binding"/>
    <property type="evidence" value="ECO:0007669"/>
    <property type="project" value="UniProtKB-UniRule"/>
</dbReference>
<dbReference type="GO" id="GO:0003735">
    <property type="term" value="F:structural constituent of ribosome"/>
    <property type="evidence" value="ECO:0007669"/>
    <property type="project" value="InterPro"/>
</dbReference>
<dbReference type="GO" id="GO:0006412">
    <property type="term" value="P:translation"/>
    <property type="evidence" value="ECO:0007669"/>
    <property type="project" value="UniProtKB-UniRule"/>
</dbReference>
<dbReference type="CDD" id="cd00364">
    <property type="entry name" value="Ribosomal_uS17"/>
    <property type="match status" value="1"/>
</dbReference>
<dbReference type="FunFam" id="2.40.50.1000:FF:000005">
    <property type="entry name" value="30S ribosomal protein S17"/>
    <property type="match status" value="1"/>
</dbReference>
<dbReference type="Gene3D" id="2.40.50.1000">
    <property type="match status" value="1"/>
</dbReference>
<dbReference type="HAMAP" id="MF_01345_A">
    <property type="entry name" value="Ribosomal_uS17_A"/>
    <property type="match status" value="1"/>
</dbReference>
<dbReference type="InterPro" id="IPR012340">
    <property type="entry name" value="NA-bd_OB-fold"/>
</dbReference>
<dbReference type="InterPro" id="IPR000266">
    <property type="entry name" value="Ribosomal_uS17"/>
</dbReference>
<dbReference type="InterPro" id="IPR028333">
    <property type="entry name" value="Ribosomal_uS17_arc/euk"/>
</dbReference>
<dbReference type="InterPro" id="IPR019978">
    <property type="entry name" value="Ribosomal_uS17_archaeal"/>
</dbReference>
<dbReference type="NCBIfam" id="NF006345">
    <property type="entry name" value="PRK08572.1"/>
    <property type="match status" value="1"/>
</dbReference>
<dbReference type="NCBIfam" id="TIGR03630">
    <property type="entry name" value="uS17_arch"/>
    <property type="match status" value="1"/>
</dbReference>
<dbReference type="PANTHER" id="PTHR10744">
    <property type="entry name" value="40S RIBOSOMAL PROTEIN S11 FAMILY MEMBER"/>
    <property type="match status" value="1"/>
</dbReference>
<dbReference type="PANTHER" id="PTHR10744:SF9">
    <property type="entry name" value="40S RIBOSOMAL PROTEIN S11-RELATED"/>
    <property type="match status" value="1"/>
</dbReference>
<dbReference type="Pfam" id="PF00366">
    <property type="entry name" value="Ribosomal_S17"/>
    <property type="match status" value="1"/>
</dbReference>
<dbReference type="PRINTS" id="PR00973">
    <property type="entry name" value="RIBOSOMALS17"/>
</dbReference>
<dbReference type="SUPFAM" id="SSF50249">
    <property type="entry name" value="Nucleic acid-binding proteins"/>
    <property type="match status" value="1"/>
</dbReference>
<feature type="chain" id="PRO_1000054980" description="Small ribosomal subunit protein uS17">
    <location>
        <begin position="1"/>
        <end position="108"/>
    </location>
</feature>
<keyword id="KW-1185">Reference proteome</keyword>
<keyword id="KW-0687">Ribonucleoprotein</keyword>
<keyword id="KW-0689">Ribosomal protein</keyword>
<keyword id="KW-0694">RNA-binding</keyword>
<keyword id="KW-0699">rRNA-binding</keyword>
<comment type="function">
    <text evidence="1">One of the primary rRNA binding proteins, it binds specifically to the 5'-end of 16S ribosomal RNA.</text>
</comment>
<comment type="subunit">
    <text evidence="1">Part of the 30S ribosomal subunit.</text>
</comment>
<comment type="similarity">
    <text evidence="1">Belongs to the universal ribosomal protein uS17 family.</text>
</comment>
<proteinExistence type="inferred from homology"/>
<gene>
    <name evidence="1" type="primary">rps17</name>
    <name type="ordered locus">Mlab_0090</name>
</gene>
<evidence type="ECO:0000255" key="1">
    <source>
        <dbReference type="HAMAP-Rule" id="MF_01345"/>
    </source>
</evidence>
<evidence type="ECO:0000305" key="2"/>
<protein>
    <recommendedName>
        <fullName evidence="1">Small ribosomal subunit protein uS17</fullName>
    </recommendedName>
    <alternativeName>
        <fullName evidence="2">30S ribosomal protein S17</fullName>
    </alternativeName>
</protein>